<reference key="1">
    <citation type="journal article" date="2008" name="Genome Res.">
        <title>Comparative genome analysis of Salmonella enteritidis PT4 and Salmonella gallinarum 287/91 provides insights into evolutionary and host adaptation pathways.</title>
        <authorList>
            <person name="Thomson N.R."/>
            <person name="Clayton D.J."/>
            <person name="Windhorst D."/>
            <person name="Vernikos G."/>
            <person name="Davidson S."/>
            <person name="Churcher C."/>
            <person name="Quail M.A."/>
            <person name="Stevens M."/>
            <person name="Jones M.A."/>
            <person name="Watson M."/>
            <person name="Barron A."/>
            <person name="Layton A."/>
            <person name="Pickard D."/>
            <person name="Kingsley R.A."/>
            <person name="Bignell A."/>
            <person name="Clark L."/>
            <person name="Harris B."/>
            <person name="Ormond D."/>
            <person name="Abdellah Z."/>
            <person name="Brooks K."/>
            <person name="Cherevach I."/>
            <person name="Chillingworth T."/>
            <person name="Woodward J."/>
            <person name="Norberczak H."/>
            <person name="Lord A."/>
            <person name="Arrowsmith C."/>
            <person name="Jagels K."/>
            <person name="Moule S."/>
            <person name="Mungall K."/>
            <person name="Saunders M."/>
            <person name="Whitehead S."/>
            <person name="Chabalgoity J.A."/>
            <person name="Maskell D."/>
            <person name="Humphreys T."/>
            <person name="Roberts M."/>
            <person name="Barrow P.A."/>
            <person name="Dougan G."/>
            <person name="Parkhill J."/>
        </authorList>
    </citation>
    <scope>NUCLEOTIDE SEQUENCE [LARGE SCALE GENOMIC DNA]</scope>
    <source>
        <strain>P125109</strain>
    </source>
</reference>
<organism>
    <name type="scientific">Salmonella enteritidis PT4 (strain P125109)</name>
    <dbReference type="NCBI Taxonomy" id="550537"/>
    <lineage>
        <taxon>Bacteria</taxon>
        <taxon>Pseudomonadati</taxon>
        <taxon>Pseudomonadota</taxon>
        <taxon>Gammaproteobacteria</taxon>
        <taxon>Enterobacterales</taxon>
        <taxon>Enterobacteriaceae</taxon>
        <taxon>Salmonella</taxon>
    </lineage>
</organism>
<evidence type="ECO:0000255" key="1">
    <source>
        <dbReference type="HAMAP-Rule" id="MF_00382"/>
    </source>
</evidence>
<evidence type="ECO:0000305" key="2"/>
<comment type="function">
    <text evidence="1">Binds directly to 23S ribosomal RNA and is necessary for the in vitro assembly process of the 50S ribosomal subunit. It is not involved in the protein synthesizing functions of that subunit.</text>
</comment>
<comment type="similarity">
    <text evidence="1">Belongs to the bacterial ribosomal protein bL20 family.</text>
</comment>
<gene>
    <name evidence="1" type="primary">rplT</name>
    <name type="ordered locus">SEN1708</name>
</gene>
<keyword id="KW-0687">Ribonucleoprotein</keyword>
<keyword id="KW-0689">Ribosomal protein</keyword>
<keyword id="KW-0694">RNA-binding</keyword>
<keyword id="KW-0699">rRNA-binding</keyword>
<protein>
    <recommendedName>
        <fullName evidence="1">Large ribosomal subunit protein bL20</fullName>
    </recommendedName>
    <alternativeName>
        <fullName evidence="2">50S ribosomal protein L20</fullName>
    </alternativeName>
</protein>
<name>RL20_SALEP</name>
<accession>B5QVW5</accession>
<dbReference type="EMBL" id="AM933172">
    <property type="protein sequence ID" value="CAR33290.1"/>
    <property type="molecule type" value="Genomic_DNA"/>
</dbReference>
<dbReference type="RefSeq" id="WP_000124850.1">
    <property type="nucleotide sequence ID" value="NC_011294.1"/>
</dbReference>
<dbReference type="SMR" id="B5QVW5"/>
<dbReference type="GeneID" id="98388757"/>
<dbReference type="KEGG" id="set:SEN1708"/>
<dbReference type="HOGENOM" id="CLU_123265_0_1_6"/>
<dbReference type="Proteomes" id="UP000000613">
    <property type="component" value="Chromosome"/>
</dbReference>
<dbReference type="GO" id="GO:1990904">
    <property type="term" value="C:ribonucleoprotein complex"/>
    <property type="evidence" value="ECO:0007669"/>
    <property type="project" value="UniProtKB-KW"/>
</dbReference>
<dbReference type="GO" id="GO:0005840">
    <property type="term" value="C:ribosome"/>
    <property type="evidence" value="ECO:0007669"/>
    <property type="project" value="UniProtKB-KW"/>
</dbReference>
<dbReference type="GO" id="GO:0019843">
    <property type="term" value="F:rRNA binding"/>
    <property type="evidence" value="ECO:0007669"/>
    <property type="project" value="UniProtKB-UniRule"/>
</dbReference>
<dbReference type="GO" id="GO:0003735">
    <property type="term" value="F:structural constituent of ribosome"/>
    <property type="evidence" value="ECO:0007669"/>
    <property type="project" value="InterPro"/>
</dbReference>
<dbReference type="GO" id="GO:0000027">
    <property type="term" value="P:ribosomal large subunit assembly"/>
    <property type="evidence" value="ECO:0007669"/>
    <property type="project" value="UniProtKB-UniRule"/>
</dbReference>
<dbReference type="GO" id="GO:0006412">
    <property type="term" value="P:translation"/>
    <property type="evidence" value="ECO:0007669"/>
    <property type="project" value="InterPro"/>
</dbReference>
<dbReference type="CDD" id="cd07026">
    <property type="entry name" value="Ribosomal_L20"/>
    <property type="match status" value="1"/>
</dbReference>
<dbReference type="FunFam" id="1.10.1900.20:FF:000001">
    <property type="entry name" value="50S ribosomal protein L20"/>
    <property type="match status" value="1"/>
</dbReference>
<dbReference type="Gene3D" id="6.10.160.10">
    <property type="match status" value="1"/>
</dbReference>
<dbReference type="Gene3D" id="1.10.1900.20">
    <property type="entry name" value="Ribosomal protein L20"/>
    <property type="match status" value="1"/>
</dbReference>
<dbReference type="HAMAP" id="MF_00382">
    <property type="entry name" value="Ribosomal_bL20"/>
    <property type="match status" value="1"/>
</dbReference>
<dbReference type="InterPro" id="IPR005813">
    <property type="entry name" value="Ribosomal_bL20"/>
</dbReference>
<dbReference type="InterPro" id="IPR049946">
    <property type="entry name" value="RIBOSOMAL_L20_CS"/>
</dbReference>
<dbReference type="InterPro" id="IPR035566">
    <property type="entry name" value="Ribosomal_protein_bL20_C"/>
</dbReference>
<dbReference type="NCBIfam" id="TIGR01032">
    <property type="entry name" value="rplT_bact"/>
    <property type="match status" value="1"/>
</dbReference>
<dbReference type="PANTHER" id="PTHR10986">
    <property type="entry name" value="39S RIBOSOMAL PROTEIN L20"/>
    <property type="match status" value="1"/>
</dbReference>
<dbReference type="Pfam" id="PF00453">
    <property type="entry name" value="Ribosomal_L20"/>
    <property type="match status" value="1"/>
</dbReference>
<dbReference type="PRINTS" id="PR00062">
    <property type="entry name" value="RIBOSOMALL20"/>
</dbReference>
<dbReference type="SUPFAM" id="SSF74731">
    <property type="entry name" value="Ribosomal protein L20"/>
    <property type="match status" value="1"/>
</dbReference>
<dbReference type="PROSITE" id="PS00937">
    <property type="entry name" value="RIBOSOMAL_L20"/>
    <property type="match status" value="1"/>
</dbReference>
<sequence>MARVKRGVIARARHKKILKQAKGYYGARSRVYRVAFQAVIKAGQYAYRDRRQRKRQFRQLWIARINAAARQNGISYSKFINGLKKASVEIDRKILADIAVFDKVAFTALVEKAKAALA</sequence>
<feature type="chain" id="PRO_1000122365" description="Large ribosomal subunit protein bL20">
    <location>
        <begin position="1"/>
        <end position="118"/>
    </location>
</feature>
<proteinExistence type="inferred from homology"/>